<reference key="1">
    <citation type="journal article" date="2005" name="Nature">
        <title>The genome sequence of the rice blast fungus Magnaporthe grisea.</title>
        <authorList>
            <person name="Dean R.A."/>
            <person name="Talbot N.J."/>
            <person name="Ebbole D.J."/>
            <person name="Farman M.L."/>
            <person name="Mitchell T.K."/>
            <person name="Orbach M.J."/>
            <person name="Thon M.R."/>
            <person name="Kulkarni R."/>
            <person name="Xu J.-R."/>
            <person name="Pan H."/>
            <person name="Read N.D."/>
            <person name="Lee Y.-H."/>
            <person name="Carbone I."/>
            <person name="Brown D."/>
            <person name="Oh Y.Y."/>
            <person name="Donofrio N."/>
            <person name="Jeong J.S."/>
            <person name="Soanes D.M."/>
            <person name="Djonovic S."/>
            <person name="Kolomiets E."/>
            <person name="Rehmeyer C."/>
            <person name="Li W."/>
            <person name="Harding M."/>
            <person name="Kim S."/>
            <person name="Lebrun M.-H."/>
            <person name="Bohnert H."/>
            <person name="Coughlan S."/>
            <person name="Butler J."/>
            <person name="Calvo S.E."/>
            <person name="Ma L.-J."/>
            <person name="Nicol R."/>
            <person name="Purcell S."/>
            <person name="Nusbaum C."/>
            <person name="Galagan J.E."/>
            <person name="Birren B.W."/>
        </authorList>
    </citation>
    <scope>NUCLEOTIDE SEQUENCE [LARGE SCALE GENOMIC DNA]</scope>
    <source>
        <strain>70-15 / ATCC MYA-4617 / FGSC 8958</strain>
    </source>
</reference>
<reference key="2">
    <citation type="journal article" date="2002" name="Mol. Plant Microbe Interact.">
        <title>MST12 regulates infectious growth but not appressorium formation in the rice blast fungus Magnaporthe grisea.</title>
        <authorList>
            <person name="Park G."/>
            <person name="Xue C."/>
            <person name="Zheng L."/>
            <person name="Lam S."/>
            <person name="Xu J.R."/>
        </authorList>
    </citation>
    <scope>FUNCTION</scope>
    <scope>DISRUPTION PHENOTYPE</scope>
</reference>
<reference key="3">
    <citation type="journal article" date="2011" name="PLoS Pathog.">
        <title>Multiple plant surface signals are sensed by different mechanisms in the rice blast fungus for appressorium formation.</title>
        <authorList>
            <person name="Liu W."/>
            <person name="Zhou X."/>
            <person name="Li G."/>
            <person name="Li L."/>
            <person name="Kong L."/>
            <person name="Wang C."/>
            <person name="Zhang H."/>
            <person name="Xu J.R."/>
        </authorList>
    </citation>
    <scope>FUNCTION</scope>
    <scope>DISRUPTION PHENOTYPE</scope>
</reference>
<comment type="function">
    <text evidence="3 4">Transcription factor that may function downstream of PMK1 to regulate genes involved in infectious hyphae growth (PubMed:11952120). Is not essential for vegetative growth, conidiation or appressorium formation (PubMed:11952120). May be involved in the regulation of the expression of the cell surface sensor MSB2 (PubMed:21283781).</text>
</comment>
<comment type="subcellular location">
    <subcellularLocation>
        <location evidence="6">Nucleus</location>
    </subcellularLocation>
</comment>
<comment type="disruption phenotype">
    <text evidence="3 4">Impairs pathogenicity on rice and barley leaves but does not affect appressorium formation (PubMed:11952120). However, fails to penetrate onion epidermal cells and to cause spreading lesions (PubMed:11952120). Reduces significantly the expression of the cell surface sensor MSB2 (PubMed:21283781).</text>
</comment>
<comment type="similarity">
    <text evidence="6">Belongs to the STE12 transcription factor family.</text>
</comment>
<evidence type="ECO:0000255" key="1">
    <source>
        <dbReference type="PROSITE-ProRule" id="PRU00042"/>
    </source>
</evidence>
<evidence type="ECO:0000256" key="2">
    <source>
        <dbReference type="SAM" id="MobiDB-lite"/>
    </source>
</evidence>
<evidence type="ECO:0000269" key="3">
    <source>
    </source>
</evidence>
<evidence type="ECO:0000269" key="4">
    <source>
    </source>
</evidence>
<evidence type="ECO:0000303" key="5">
    <source>
    </source>
</evidence>
<evidence type="ECO:0000305" key="6"/>
<dbReference type="EMBL" id="CM001233">
    <property type="protein sequence ID" value="EHA52690.1"/>
    <property type="molecule type" value="Genomic_DNA"/>
</dbReference>
<dbReference type="RefSeq" id="XP_003712497.1">
    <property type="nucleotide sequence ID" value="XM_003712449.1"/>
</dbReference>
<dbReference type="SMR" id="G4N3L5"/>
<dbReference type="STRING" id="242507.G4N3L5"/>
<dbReference type="EnsemblFungi" id="MGG_12958T0">
    <property type="protein sequence ID" value="MGG_12958T0"/>
    <property type="gene ID" value="MGG_12958"/>
</dbReference>
<dbReference type="GeneID" id="5048893"/>
<dbReference type="KEGG" id="mgr:MGG_12958"/>
<dbReference type="VEuPathDB" id="FungiDB:MGG_12958"/>
<dbReference type="eggNOG" id="KOG1721">
    <property type="taxonomic scope" value="Eukaryota"/>
</dbReference>
<dbReference type="HOGENOM" id="CLU_025505_0_0_1"/>
<dbReference type="InParanoid" id="G4N3L5"/>
<dbReference type="OMA" id="EMSRHGT"/>
<dbReference type="OrthoDB" id="1095242at2759"/>
<dbReference type="PHI-base" id="PHI:2122"/>
<dbReference type="PHI-base" id="PHI:2132"/>
<dbReference type="PHI-base" id="PHI:2164"/>
<dbReference type="PHI-base" id="PHI:2187"/>
<dbReference type="Proteomes" id="UP000009058">
    <property type="component" value="Chromosome 3"/>
</dbReference>
<dbReference type="GO" id="GO:0005634">
    <property type="term" value="C:nucleus"/>
    <property type="evidence" value="ECO:0007669"/>
    <property type="project" value="UniProtKB-SubCell"/>
</dbReference>
<dbReference type="GO" id="GO:1990526">
    <property type="term" value="C:Ste12p-Dig1p-Dig2p complex"/>
    <property type="evidence" value="ECO:0007669"/>
    <property type="project" value="TreeGrafter"/>
</dbReference>
<dbReference type="GO" id="GO:1990527">
    <property type="term" value="C:Tec1p-Ste12p-Dig1p complex"/>
    <property type="evidence" value="ECO:0007669"/>
    <property type="project" value="TreeGrafter"/>
</dbReference>
<dbReference type="GO" id="GO:0003700">
    <property type="term" value="F:DNA-binding transcription factor activity"/>
    <property type="evidence" value="ECO:0007669"/>
    <property type="project" value="InterPro"/>
</dbReference>
<dbReference type="GO" id="GO:0008270">
    <property type="term" value="F:zinc ion binding"/>
    <property type="evidence" value="ECO:0007669"/>
    <property type="project" value="UniProtKB-KW"/>
</dbReference>
<dbReference type="GO" id="GO:0019953">
    <property type="term" value="P:sexual reproduction"/>
    <property type="evidence" value="ECO:0007669"/>
    <property type="project" value="TreeGrafter"/>
</dbReference>
<dbReference type="FunFam" id="3.30.160.60:FF:000243">
    <property type="entry name" value="Probable transcription factor steA"/>
    <property type="match status" value="1"/>
</dbReference>
<dbReference type="FunFam" id="3.30.160.60:FF:000390">
    <property type="entry name" value="Transcription factor stea"/>
    <property type="match status" value="1"/>
</dbReference>
<dbReference type="Gene3D" id="3.30.160.60">
    <property type="entry name" value="Classic Zinc Finger"/>
    <property type="match status" value="2"/>
</dbReference>
<dbReference type="InterPro" id="IPR003120">
    <property type="entry name" value="Ste12"/>
</dbReference>
<dbReference type="InterPro" id="IPR052127">
    <property type="entry name" value="STE12_transcription_factor"/>
</dbReference>
<dbReference type="InterPro" id="IPR036236">
    <property type="entry name" value="Znf_C2H2_sf"/>
</dbReference>
<dbReference type="InterPro" id="IPR013087">
    <property type="entry name" value="Znf_C2H2_type"/>
</dbReference>
<dbReference type="PANTHER" id="PTHR47427">
    <property type="entry name" value="PROTEIN STE12"/>
    <property type="match status" value="1"/>
</dbReference>
<dbReference type="PANTHER" id="PTHR47427:SF1">
    <property type="entry name" value="PROTEIN STE12"/>
    <property type="match status" value="1"/>
</dbReference>
<dbReference type="Pfam" id="PF02200">
    <property type="entry name" value="STE"/>
    <property type="match status" value="1"/>
</dbReference>
<dbReference type="Pfam" id="PF00096">
    <property type="entry name" value="zf-C2H2"/>
    <property type="match status" value="2"/>
</dbReference>
<dbReference type="SMART" id="SM00424">
    <property type="entry name" value="STE"/>
    <property type="match status" value="1"/>
</dbReference>
<dbReference type="SMART" id="SM00355">
    <property type="entry name" value="ZnF_C2H2"/>
    <property type="match status" value="2"/>
</dbReference>
<dbReference type="SUPFAM" id="SSF57667">
    <property type="entry name" value="beta-beta-alpha zinc fingers"/>
    <property type="match status" value="1"/>
</dbReference>
<dbReference type="PROSITE" id="PS00028">
    <property type="entry name" value="ZINC_FINGER_C2H2_1"/>
    <property type="match status" value="2"/>
</dbReference>
<dbReference type="PROSITE" id="PS50157">
    <property type="entry name" value="ZINC_FINGER_C2H2_2"/>
    <property type="match status" value="2"/>
</dbReference>
<sequence>MYSHPHNAGVAAAPQKPETFMLSTEAQQALPHDAQVALQQVDNLKYFLISAPVDWQPDQYIRRFLLPTGEYVSCVLWNNLFHISGTDIVRCLSFRFQAFGRPVKNSKKFEEGIFSDLRNLKSGTDASLEEPKSPFLDFLYKNNCIRTQKKQKVFYWYSVPHDRLFLDALERDLKREKMGQEATTMAVSEPALSFQYDSSQSLYEQLTKAQQANSSSFNAQQVSFPPSQSTSPVMRAMDSMPPPPQMMPQPMPQSMAPLADGLDAMVPYAAMGMAPGMPPQPAVKREPDFNRVQYNQNGVPINQGHQRHASMPAYGLEYSPAPSFVSSHYDDYGNRGISFEPLTPPQQAMGMGAEPAYIANEETGLYTAIPDHMNGVNGLNGMIQLPPSNLAGPQFTRSYGSNNVYSVIEGSPTYKQRRRRSSIPPGMSAIAAATAAATAAHRPSDLRRSVSASVGPVAEGDESLDNSPPGLIYSNQPMSMANHQREAMEQMSRHGTPLSTVEGSPGMHNVNLEQQQYPMPSEDMTSPMDDRSRPMAQGGPSVVRRARSATVMGSEVGPYPQKSHSCPIPTCGRLFKRLEHLKRHVRTHTQERPYICPYCSKAFSRSDNLAQHKRTHDRADGGEGLILSGEDEEEYSGDDHLGSLEEASPTSEGGYVTSSLNSAMAHSNTSQHPGSNAVSPNPGPMSHAPTYNSMQTLMQPMQMSQPQPINAGGMM</sequence>
<keyword id="KW-0479">Metal-binding</keyword>
<keyword id="KW-0539">Nucleus</keyword>
<keyword id="KW-1185">Reference proteome</keyword>
<keyword id="KW-0677">Repeat</keyword>
<keyword id="KW-0804">Transcription</keyword>
<keyword id="KW-0805">Transcription regulation</keyword>
<keyword id="KW-0843">Virulence</keyword>
<keyword id="KW-0862">Zinc</keyword>
<keyword id="KW-0863">Zinc-finger</keyword>
<organism>
    <name type="scientific">Pyricularia oryzae (strain 70-15 / ATCC MYA-4617 / FGSC 8958)</name>
    <name type="common">Rice blast fungus</name>
    <name type="synonym">Magnaporthe oryzae</name>
    <dbReference type="NCBI Taxonomy" id="242507"/>
    <lineage>
        <taxon>Eukaryota</taxon>
        <taxon>Fungi</taxon>
        <taxon>Dikarya</taxon>
        <taxon>Ascomycota</taxon>
        <taxon>Pezizomycotina</taxon>
        <taxon>Sordariomycetes</taxon>
        <taxon>Sordariomycetidae</taxon>
        <taxon>Magnaporthales</taxon>
        <taxon>Pyriculariaceae</taxon>
        <taxon>Pyricularia</taxon>
    </lineage>
</organism>
<feature type="chain" id="PRO_0000453100" description="Transcription factor MST12">
    <location>
        <begin position="1"/>
        <end position="715"/>
    </location>
</feature>
<feature type="zinc finger region" description="C2H2-type 1" evidence="1">
    <location>
        <begin position="564"/>
        <end position="588"/>
    </location>
</feature>
<feature type="zinc finger region" description="C2H2-type 2" evidence="1">
    <location>
        <begin position="594"/>
        <end position="616"/>
    </location>
</feature>
<feature type="region of interest" description="Disordered" evidence="2">
    <location>
        <begin position="214"/>
        <end position="243"/>
    </location>
</feature>
<feature type="region of interest" description="Disordered" evidence="2">
    <location>
        <begin position="439"/>
        <end position="469"/>
    </location>
</feature>
<feature type="region of interest" description="Disordered" evidence="2">
    <location>
        <begin position="518"/>
        <end position="539"/>
    </location>
</feature>
<feature type="region of interest" description="Disordered" evidence="2">
    <location>
        <begin position="632"/>
        <end position="691"/>
    </location>
</feature>
<feature type="compositionally biased region" description="Low complexity" evidence="2">
    <location>
        <begin position="214"/>
        <end position="224"/>
    </location>
</feature>
<feature type="compositionally biased region" description="Polar residues" evidence="2">
    <location>
        <begin position="648"/>
        <end position="679"/>
    </location>
</feature>
<protein>
    <recommendedName>
        <fullName evidence="5">Transcription factor MST12</fullName>
    </recommendedName>
</protein>
<accession>G4N3L5</accession>
<proteinExistence type="inferred from homology"/>
<gene>
    <name evidence="5" type="primary">MST12</name>
    <name type="ORF">MGG_12958</name>
</gene>
<name>MST12_PYRO7</name>